<evidence type="ECO:0000255" key="1">
    <source>
        <dbReference type="HAMAP-Rule" id="MF_00503"/>
    </source>
</evidence>
<evidence type="ECO:0000305" key="2"/>
<name>RL9_PROM1</name>
<reference key="1">
    <citation type="journal article" date="2007" name="PLoS Genet.">
        <title>Patterns and implications of gene gain and loss in the evolution of Prochlorococcus.</title>
        <authorList>
            <person name="Kettler G.C."/>
            <person name="Martiny A.C."/>
            <person name="Huang K."/>
            <person name="Zucker J."/>
            <person name="Coleman M.L."/>
            <person name="Rodrigue S."/>
            <person name="Chen F."/>
            <person name="Lapidus A."/>
            <person name="Ferriera S."/>
            <person name="Johnson J."/>
            <person name="Steglich C."/>
            <person name="Church G.M."/>
            <person name="Richardson P."/>
            <person name="Chisholm S.W."/>
        </authorList>
    </citation>
    <scope>NUCLEOTIDE SEQUENCE [LARGE SCALE GENOMIC DNA]</scope>
    <source>
        <strain>NATL1A</strain>
    </source>
</reference>
<comment type="function">
    <text evidence="1">Binds to the 23S rRNA.</text>
</comment>
<comment type="similarity">
    <text evidence="1">Belongs to the bacterial ribosomal protein bL9 family.</text>
</comment>
<dbReference type="EMBL" id="CP000553">
    <property type="protein sequence ID" value="ABM76699.1"/>
    <property type="molecule type" value="Genomic_DNA"/>
</dbReference>
<dbReference type="RefSeq" id="WP_011824637.1">
    <property type="nucleotide sequence ID" value="NC_008819.1"/>
</dbReference>
<dbReference type="SMR" id="A2C5D9"/>
<dbReference type="KEGG" id="pme:NATL1_21431"/>
<dbReference type="eggNOG" id="COG0359">
    <property type="taxonomic scope" value="Bacteria"/>
</dbReference>
<dbReference type="HOGENOM" id="CLU_078938_5_1_3"/>
<dbReference type="Proteomes" id="UP000002592">
    <property type="component" value="Chromosome"/>
</dbReference>
<dbReference type="GO" id="GO:1990904">
    <property type="term" value="C:ribonucleoprotein complex"/>
    <property type="evidence" value="ECO:0007669"/>
    <property type="project" value="UniProtKB-KW"/>
</dbReference>
<dbReference type="GO" id="GO:0005840">
    <property type="term" value="C:ribosome"/>
    <property type="evidence" value="ECO:0007669"/>
    <property type="project" value="UniProtKB-KW"/>
</dbReference>
<dbReference type="GO" id="GO:0019843">
    <property type="term" value="F:rRNA binding"/>
    <property type="evidence" value="ECO:0007669"/>
    <property type="project" value="UniProtKB-UniRule"/>
</dbReference>
<dbReference type="GO" id="GO:0003735">
    <property type="term" value="F:structural constituent of ribosome"/>
    <property type="evidence" value="ECO:0007669"/>
    <property type="project" value="InterPro"/>
</dbReference>
<dbReference type="GO" id="GO:0006412">
    <property type="term" value="P:translation"/>
    <property type="evidence" value="ECO:0007669"/>
    <property type="project" value="UniProtKB-UniRule"/>
</dbReference>
<dbReference type="Gene3D" id="3.10.430.100">
    <property type="entry name" value="Ribosomal protein L9, C-terminal domain"/>
    <property type="match status" value="1"/>
</dbReference>
<dbReference type="Gene3D" id="3.40.5.10">
    <property type="entry name" value="Ribosomal protein L9, N-terminal domain"/>
    <property type="match status" value="1"/>
</dbReference>
<dbReference type="HAMAP" id="MF_00503">
    <property type="entry name" value="Ribosomal_bL9"/>
    <property type="match status" value="1"/>
</dbReference>
<dbReference type="InterPro" id="IPR000244">
    <property type="entry name" value="Ribosomal_bL9"/>
</dbReference>
<dbReference type="InterPro" id="IPR009027">
    <property type="entry name" value="Ribosomal_bL9/RNase_H1_N"/>
</dbReference>
<dbReference type="InterPro" id="IPR020594">
    <property type="entry name" value="Ribosomal_bL9_bac/chp"/>
</dbReference>
<dbReference type="InterPro" id="IPR020069">
    <property type="entry name" value="Ribosomal_bL9_C"/>
</dbReference>
<dbReference type="InterPro" id="IPR036791">
    <property type="entry name" value="Ribosomal_bL9_C_sf"/>
</dbReference>
<dbReference type="InterPro" id="IPR020070">
    <property type="entry name" value="Ribosomal_bL9_N"/>
</dbReference>
<dbReference type="InterPro" id="IPR036935">
    <property type="entry name" value="Ribosomal_bL9_N_sf"/>
</dbReference>
<dbReference type="NCBIfam" id="TIGR00158">
    <property type="entry name" value="L9"/>
    <property type="match status" value="1"/>
</dbReference>
<dbReference type="PANTHER" id="PTHR21368">
    <property type="entry name" value="50S RIBOSOMAL PROTEIN L9"/>
    <property type="match status" value="1"/>
</dbReference>
<dbReference type="Pfam" id="PF03948">
    <property type="entry name" value="Ribosomal_L9_C"/>
    <property type="match status" value="1"/>
</dbReference>
<dbReference type="Pfam" id="PF01281">
    <property type="entry name" value="Ribosomal_L9_N"/>
    <property type="match status" value="1"/>
</dbReference>
<dbReference type="SUPFAM" id="SSF55658">
    <property type="entry name" value="L9 N-domain-like"/>
    <property type="match status" value="1"/>
</dbReference>
<dbReference type="SUPFAM" id="SSF55653">
    <property type="entry name" value="Ribosomal protein L9 C-domain"/>
    <property type="match status" value="1"/>
</dbReference>
<dbReference type="PROSITE" id="PS00651">
    <property type="entry name" value="RIBOSOMAL_L9"/>
    <property type="match status" value="1"/>
</dbReference>
<proteinExistence type="inferred from homology"/>
<keyword id="KW-0687">Ribonucleoprotein</keyword>
<keyword id="KW-0689">Ribosomal protein</keyword>
<keyword id="KW-0694">RNA-binding</keyword>
<keyword id="KW-0699">rRNA-binding</keyword>
<organism>
    <name type="scientific">Prochlorococcus marinus (strain NATL1A)</name>
    <dbReference type="NCBI Taxonomy" id="167555"/>
    <lineage>
        <taxon>Bacteria</taxon>
        <taxon>Bacillati</taxon>
        <taxon>Cyanobacteriota</taxon>
        <taxon>Cyanophyceae</taxon>
        <taxon>Synechococcales</taxon>
        <taxon>Prochlorococcaceae</taxon>
        <taxon>Prochlorococcus</taxon>
    </lineage>
</organism>
<protein>
    <recommendedName>
        <fullName evidence="1">Large ribosomal subunit protein bL9</fullName>
    </recommendedName>
    <alternativeName>
        <fullName evidence="2">50S ribosomal protein L9</fullName>
    </alternativeName>
</protein>
<feature type="chain" id="PRO_1000014831" description="Large ribosomal subunit protein bL9">
    <location>
        <begin position="1"/>
        <end position="152"/>
    </location>
</feature>
<gene>
    <name evidence="1" type="primary">rplI</name>
    <name evidence="1" type="synonym">rpl9</name>
    <name type="ordered locus">NATL1_21431</name>
</gene>
<sequence>MAKRVQVVLNEDIKSLGNDGDLVEVAPGFARNFLLPNKKALPVTPTVLKQVEHRRAKQAEKEAAKKQEAIDFQTALTTIGRFTVKKQVGEDGVLFGTVTNGDVAEVVKEATKKDIDRRDISVPEIHGVGKYKVQIKLHNEVNAEINLEVTSY</sequence>
<accession>A2C5D9</accession>